<sequence length="242" mass="27465">MSRDEIYRQSQSFLDDFGFGESVATVFDDMLERSVPFYAELQRMIAEMAGDFAMPHTRIYDFGCSTGTTLIGLDQAIGPRGLTLVGVDNSQEMLAKCRAKMAGHAFANAVELIRADLNQGVVMENASLALMILTLQFVRPLYRDRLVRAIHDGLEENGALVLVEKVLGESSLFNRSFIKYYYEFKKRNGYTELEIAQKREALENVLVPYKLAENLEMLESAGFRYVDVFFKWYNFVGIVAVK</sequence>
<organism>
    <name type="scientific">Methylococcus capsulatus (strain ATCC 33009 / NCIMB 11132 / Bath)</name>
    <dbReference type="NCBI Taxonomy" id="243233"/>
    <lineage>
        <taxon>Bacteria</taxon>
        <taxon>Pseudomonadati</taxon>
        <taxon>Pseudomonadota</taxon>
        <taxon>Gammaproteobacteria</taxon>
        <taxon>Methylococcales</taxon>
        <taxon>Methylococcaceae</taxon>
        <taxon>Methylococcus</taxon>
    </lineage>
</organism>
<dbReference type="EC" id="2.1.3.-" evidence="1"/>
<dbReference type="EMBL" id="AE017282">
    <property type="protein sequence ID" value="AAU91644.1"/>
    <property type="status" value="ALT_INIT"/>
    <property type="molecule type" value="Genomic_DNA"/>
</dbReference>
<dbReference type="RefSeq" id="WP_050738209.1">
    <property type="nucleotide sequence ID" value="NC_002977.6"/>
</dbReference>
<dbReference type="SMR" id="Q605H3"/>
<dbReference type="STRING" id="243233.MCA2311"/>
<dbReference type="GeneID" id="88224515"/>
<dbReference type="KEGG" id="mca:MCA2311"/>
<dbReference type="eggNOG" id="COG2226">
    <property type="taxonomic scope" value="Bacteria"/>
</dbReference>
<dbReference type="HOGENOM" id="CLU_078475_0_0_6"/>
<dbReference type="Proteomes" id="UP000006821">
    <property type="component" value="Chromosome"/>
</dbReference>
<dbReference type="GO" id="GO:0016743">
    <property type="term" value="F:carboxyl- or carbamoyltransferase activity"/>
    <property type="evidence" value="ECO:0007669"/>
    <property type="project" value="UniProtKB-UniRule"/>
</dbReference>
<dbReference type="GO" id="GO:1904047">
    <property type="term" value="F:S-adenosyl-L-methionine binding"/>
    <property type="evidence" value="ECO:0007669"/>
    <property type="project" value="UniProtKB-UniRule"/>
</dbReference>
<dbReference type="GO" id="GO:0002098">
    <property type="term" value="P:tRNA wobble uridine modification"/>
    <property type="evidence" value="ECO:0007669"/>
    <property type="project" value="InterPro"/>
</dbReference>
<dbReference type="CDD" id="cd02440">
    <property type="entry name" value="AdoMet_MTases"/>
    <property type="match status" value="1"/>
</dbReference>
<dbReference type="Gene3D" id="3.40.50.150">
    <property type="entry name" value="Vaccinia Virus protein VP39"/>
    <property type="match status" value="1"/>
</dbReference>
<dbReference type="HAMAP" id="MF_01589">
    <property type="entry name" value="Cx_SAM_synthase"/>
    <property type="match status" value="1"/>
</dbReference>
<dbReference type="InterPro" id="IPR005271">
    <property type="entry name" value="CmoA"/>
</dbReference>
<dbReference type="InterPro" id="IPR041698">
    <property type="entry name" value="Methyltransf_25"/>
</dbReference>
<dbReference type="InterPro" id="IPR029063">
    <property type="entry name" value="SAM-dependent_MTases_sf"/>
</dbReference>
<dbReference type="NCBIfam" id="TIGR00740">
    <property type="entry name" value="carboxy-S-adenosyl-L-methionine synthase CmoA"/>
    <property type="match status" value="1"/>
</dbReference>
<dbReference type="PANTHER" id="PTHR43861:SF2">
    <property type="entry name" value="CARBOXY-S-ADENOSYL-L-METHIONINE SYNTHASE"/>
    <property type="match status" value="1"/>
</dbReference>
<dbReference type="PANTHER" id="PTHR43861">
    <property type="entry name" value="TRANS-ACONITATE 2-METHYLTRANSFERASE-RELATED"/>
    <property type="match status" value="1"/>
</dbReference>
<dbReference type="Pfam" id="PF13649">
    <property type="entry name" value="Methyltransf_25"/>
    <property type="match status" value="1"/>
</dbReference>
<dbReference type="PIRSF" id="PIRSF006325">
    <property type="entry name" value="MeTrfase_bac"/>
    <property type="match status" value="1"/>
</dbReference>
<dbReference type="SUPFAM" id="SSF53335">
    <property type="entry name" value="S-adenosyl-L-methionine-dependent methyltransferases"/>
    <property type="match status" value="1"/>
</dbReference>
<reference key="1">
    <citation type="journal article" date="2004" name="PLoS Biol.">
        <title>Genomic insights into methanotrophy: the complete genome sequence of Methylococcus capsulatus (Bath).</title>
        <authorList>
            <person name="Ward N.L."/>
            <person name="Larsen O."/>
            <person name="Sakwa J."/>
            <person name="Bruseth L."/>
            <person name="Khouri H.M."/>
            <person name="Durkin A.S."/>
            <person name="Dimitrov G."/>
            <person name="Jiang L."/>
            <person name="Scanlan D."/>
            <person name="Kang K.H."/>
            <person name="Lewis M.R."/>
            <person name="Nelson K.E."/>
            <person name="Methe B.A."/>
            <person name="Wu M."/>
            <person name="Heidelberg J.F."/>
            <person name="Paulsen I.T."/>
            <person name="Fouts D.E."/>
            <person name="Ravel J."/>
            <person name="Tettelin H."/>
            <person name="Ren Q."/>
            <person name="Read T.D."/>
            <person name="DeBoy R.T."/>
            <person name="Seshadri R."/>
            <person name="Salzberg S.L."/>
            <person name="Jensen H.B."/>
            <person name="Birkeland N.K."/>
            <person name="Nelson W.C."/>
            <person name="Dodson R.J."/>
            <person name="Grindhaug S.H."/>
            <person name="Holt I.E."/>
            <person name="Eidhammer I."/>
            <person name="Jonasen I."/>
            <person name="Vanaken S."/>
            <person name="Utterback T.R."/>
            <person name="Feldblyum T.V."/>
            <person name="Fraser C.M."/>
            <person name="Lillehaug J.R."/>
            <person name="Eisen J.A."/>
        </authorList>
    </citation>
    <scope>NUCLEOTIDE SEQUENCE [LARGE SCALE GENOMIC DNA]</scope>
    <source>
        <strain>ATCC 33009 / NCIMB 11132 / Bath</strain>
    </source>
</reference>
<proteinExistence type="inferred from homology"/>
<protein>
    <recommendedName>
        <fullName evidence="1">Carboxy-S-adenosyl-L-methionine synthase</fullName>
        <shortName evidence="1">Cx-SAM synthase</shortName>
        <ecNumber evidence="1">2.1.3.-</ecNumber>
    </recommendedName>
</protein>
<keyword id="KW-1185">Reference proteome</keyword>
<keyword id="KW-0949">S-adenosyl-L-methionine</keyword>
<keyword id="KW-0808">Transferase</keyword>
<name>CMOA_METCA</name>
<accession>Q605H3</accession>
<gene>
    <name evidence="1" type="primary">cmoA</name>
    <name type="ordered locus">MCA2311</name>
</gene>
<evidence type="ECO:0000255" key="1">
    <source>
        <dbReference type="HAMAP-Rule" id="MF_01589"/>
    </source>
</evidence>
<evidence type="ECO:0000305" key="2"/>
<comment type="function">
    <text evidence="1">Catalyzes the conversion of S-adenosyl-L-methionine (SAM) to carboxy-S-adenosyl-L-methionine (Cx-SAM).</text>
</comment>
<comment type="catalytic activity">
    <reaction evidence="1">
        <text>prephenate + S-adenosyl-L-methionine = carboxy-S-adenosyl-L-methionine + 3-phenylpyruvate + H2O</text>
        <dbReference type="Rhea" id="RHEA:51692"/>
        <dbReference type="ChEBI" id="CHEBI:15377"/>
        <dbReference type="ChEBI" id="CHEBI:18005"/>
        <dbReference type="ChEBI" id="CHEBI:29934"/>
        <dbReference type="ChEBI" id="CHEBI:59789"/>
        <dbReference type="ChEBI" id="CHEBI:134278"/>
    </reaction>
</comment>
<comment type="subunit">
    <text evidence="1">Homodimer.</text>
</comment>
<comment type="similarity">
    <text evidence="1">Belongs to the class I-like SAM-binding methyltransferase superfamily. Cx-SAM synthase family.</text>
</comment>
<comment type="sequence caution" evidence="2">
    <conflict type="erroneous initiation">
        <sequence resource="EMBL-CDS" id="AAU91644"/>
    </conflict>
</comment>
<feature type="chain" id="PRO_0000314347" description="Carboxy-S-adenosyl-L-methionine synthase">
    <location>
        <begin position="1"/>
        <end position="242"/>
    </location>
</feature>
<feature type="binding site" evidence="1">
    <location>
        <position position="38"/>
    </location>
    <ligand>
        <name>S-adenosyl-L-methionine</name>
        <dbReference type="ChEBI" id="CHEBI:59789"/>
    </ligand>
</feature>
<feature type="binding site" evidence="1">
    <location>
        <begin position="63"/>
        <end position="65"/>
    </location>
    <ligand>
        <name>S-adenosyl-L-methionine</name>
        <dbReference type="ChEBI" id="CHEBI:59789"/>
    </ligand>
</feature>
<feature type="binding site" evidence="1">
    <location>
        <begin position="88"/>
        <end position="89"/>
    </location>
    <ligand>
        <name>S-adenosyl-L-methionine</name>
        <dbReference type="ChEBI" id="CHEBI:59789"/>
    </ligand>
</feature>
<feature type="binding site" evidence="1">
    <location>
        <begin position="116"/>
        <end position="117"/>
    </location>
    <ligand>
        <name>S-adenosyl-L-methionine</name>
        <dbReference type="ChEBI" id="CHEBI:59789"/>
    </ligand>
</feature>
<feature type="binding site" evidence="1">
    <location>
        <position position="199"/>
    </location>
    <ligand>
        <name>S-adenosyl-L-methionine</name>
        <dbReference type="ChEBI" id="CHEBI:59789"/>
    </ligand>
</feature>